<feature type="signal peptide" evidence="2">
    <location>
        <begin position="1"/>
        <end position="29"/>
    </location>
</feature>
<feature type="chain" id="PRO_5008971902" description="Brassinosteroid LRR receptor kinase BRL3" evidence="2">
    <location>
        <begin position="30"/>
        <end position="1214"/>
    </location>
</feature>
<feature type="transmembrane region" description="Helical" evidence="2">
    <location>
        <begin position="829"/>
        <end position="849"/>
    </location>
</feature>
<feature type="repeat" description="LRR 1" evidence="2">
    <location>
        <begin position="103"/>
        <end position="127"/>
    </location>
</feature>
<feature type="repeat" description="LRR 2" evidence="2">
    <location>
        <begin position="131"/>
        <end position="155"/>
    </location>
</feature>
<feature type="repeat" description="LRR 3" evidence="2">
    <location>
        <begin position="156"/>
        <end position="177"/>
    </location>
</feature>
<feature type="repeat" description="LRR 4" evidence="2">
    <location>
        <begin position="178"/>
        <end position="202"/>
    </location>
</feature>
<feature type="repeat" description="LRR 5" evidence="2">
    <location>
        <begin position="204"/>
        <end position="228"/>
    </location>
</feature>
<feature type="repeat" description="LRR 6" evidence="2">
    <location>
        <begin position="230"/>
        <end position="250"/>
    </location>
</feature>
<feature type="repeat" description="LRR 7" evidence="2">
    <location>
        <begin position="252"/>
        <end position="276"/>
    </location>
</feature>
<feature type="repeat" description="LRR 8" evidence="2">
    <location>
        <begin position="277"/>
        <end position="302"/>
    </location>
</feature>
<feature type="repeat" description="LRR 9" evidence="2">
    <location>
        <begin position="303"/>
        <end position="325"/>
    </location>
</feature>
<feature type="repeat" description="LRR 10" evidence="2">
    <location>
        <begin position="327"/>
        <end position="351"/>
    </location>
</feature>
<feature type="repeat" description="LRR 11" evidence="2">
    <location>
        <begin position="353"/>
        <end position="375"/>
    </location>
</feature>
<feature type="repeat" description="LRR 12" evidence="2">
    <location>
        <begin position="377"/>
        <end position="400"/>
    </location>
</feature>
<feature type="repeat" description="LRR 13" evidence="2">
    <location>
        <begin position="401"/>
        <end position="427"/>
    </location>
</feature>
<feature type="repeat" description="LRR 14" evidence="2">
    <location>
        <begin position="429"/>
        <end position="451"/>
    </location>
</feature>
<feature type="repeat" description="LRR 15" evidence="2">
    <location>
        <begin position="452"/>
        <end position="476"/>
    </location>
</feature>
<feature type="repeat" description="LRR 16" evidence="2">
    <location>
        <begin position="478"/>
        <end position="500"/>
    </location>
</feature>
<feature type="repeat" description="LRR 17" evidence="2">
    <location>
        <begin position="502"/>
        <end position="525"/>
    </location>
</feature>
<feature type="repeat" description="LRR 18" evidence="2">
    <location>
        <begin position="526"/>
        <end position="549"/>
    </location>
</feature>
<feature type="repeat" description="LRR 19" evidence="2">
    <location>
        <begin position="550"/>
        <end position="572"/>
    </location>
</feature>
<feature type="repeat" description="LRR 20" evidence="2">
    <location>
        <begin position="573"/>
        <end position="597"/>
    </location>
</feature>
<feature type="repeat" description="LRR 21" evidence="2">
    <location>
        <begin position="599"/>
        <end position="621"/>
    </location>
</feature>
<feature type="repeat" description="LRR 22" evidence="2">
    <location>
        <begin position="650"/>
        <end position="673"/>
    </location>
</feature>
<feature type="repeat" description="LRR 23" evidence="2">
    <location>
        <begin position="689"/>
        <end position="712"/>
    </location>
</feature>
<feature type="repeat" description="LRR 24" evidence="2">
    <location>
        <begin position="713"/>
        <end position="736"/>
    </location>
</feature>
<feature type="repeat" description="LRR 25" evidence="2">
    <location>
        <begin position="738"/>
        <end position="760"/>
    </location>
</feature>
<feature type="repeat" description="LRR 26" evidence="2">
    <location>
        <begin position="762"/>
        <end position="786"/>
    </location>
</feature>
<feature type="domain" description="Protein kinase" evidence="3">
    <location>
        <begin position="913"/>
        <end position="1196"/>
    </location>
</feature>
<feature type="short sequence motif" description="Cys pair 1" evidence="1">
    <location>
        <begin position="69"/>
        <end position="76"/>
    </location>
</feature>
<feature type="short sequence motif" description="Cys pair 2" evidence="1">
    <location>
        <begin position="799"/>
        <end position="806"/>
    </location>
</feature>
<feature type="active site" description="Proton acceptor" evidence="3">
    <location>
        <position position="1039"/>
    </location>
</feature>
<feature type="binding site" evidence="1">
    <location>
        <position position="678"/>
    </location>
    <ligand>
        <name>brassinolide</name>
        <dbReference type="ChEBI" id="CHEBI:28277"/>
    </ligand>
</feature>
<feature type="binding site" evidence="3">
    <location>
        <begin position="919"/>
        <end position="927"/>
    </location>
    <ligand>
        <name>ATP</name>
        <dbReference type="ChEBI" id="CHEBI:30616"/>
    </ligand>
</feature>
<feature type="binding site" evidence="3">
    <location>
        <position position="941"/>
    </location>
    <ligand>
        <name>ATP</name>
        <dbReference type="ChEBI" id="CHEBI:30616"/>
    </ligand>
</feature>
<feature type="binding site" evidence="1">
    <location>
        <begin position="987"/>
        <end position="989"/>
    </location>
    <ligand>
        <name>ATP</name>
        <dbReference type="ChEBI" id="CHEBI:30616"/>
    </ligand>
</feature>
<feature type="binding site" evidence="1">
    <location>
        <begin position="993"/>
        <end position="996"/>
    </location>
    <ligand>
        <name>ATP</name>
        <dbReference type="ChEBI" id="CHEBI:30616"/>
    </ligand>
</feature>
<feature type="binding site" evidence="1">
    <location>
        <begin position="1039"/>
        <end position="1044"/>
    </location>
    <ligand>
        <name>ATP</name>
        <dbReference type="ChEBI" id="CHEBI:30616"/>
    </ligand>
</feature>
<feature type="binding site" evidence="1">
    <location>
        <position position="1057"/>
    </location>
    <ligand>
        <name>ATP</name>
        <dbReference type="ChEBI" id="CHEBI:30616"/>
    </ligand>
</feature>
<feature type="glycosylation site" description="N-linked (GlcNAc...) asparagine" evidence="4">
    <location>
        <position position="61"/>
    </location>
</feature>
<feature type="glycosylation site" description="N-linked (GlcNAc...) asparagine" evidence="4">
    <location>
        <position position="145"/>
    </location>
</feature>
<feature type="glycosylation site" description="N-linked (GlcNAc...) asparagine" evidence="4">
    <location>
        <position position="163"/>
    </location>
</feature>
<feature type="glycosylation site" description="N-linked (GlcNAc...) asparagine" evidence="4">
    <location>
        <position position="197"/>
    </location>
</feature>
<feature type="glycosylation site" description="N-linked (GlcNAc...) asparagine" evidence="4">
    <location>
        <position position="210"/>
    </location>
</feature>
<feature type="glycosylation site" description="N-linked (GlcNAc...) asparagine" evidence="4">
    <location>
        <position position="254"/>
    </location>
</feature>
<feature type="glycosylation site" description="N-linked (GlcNAc...) asparagine" evidence="4">
    <location>
        <position position="264"/>
    </location>
</feature>
<feature type="glycosylation site" description="N-linked (GlcNAc...) asparagine" evidence="4">
    <location>
        <position position="279"/>
    </location>
</feature>
<feature type="glycosylation site" description="N-linked (GlcNAc...) asparagine" evidence="4">
    <location>
        <position position="400"/>
    </location>
</feature>
<feature type="glycosylation site" description="N-linked (GlcNAc...) asparagine" evidence="4">
    <location>
        <position position="413"/>
    </location>
</feature>
<feature type="glycosylation site" description="N-linked (GlcNAc...) asparagine" evidence="4">
    <location>
        <position position="466"/>
    </location>
</feature>
<feature type="glycosylation site" description="N-linked (GlcNAc...) asparagine" evidence="4">
    <location>
        <position position="512"/>
    </location>
</feature>
<feature type="glycosylation site" description="N-linked (GlcNAc...) asparagine" evidence="4">
    <location>
        <position position="524"/>
    </location>
</feature>
<feature type="glycosylation site" description="N-linked (GlcNAc...) asparagine" evidence="4">
    <location>
        <position position="561"/>
    </location>
</feature>
<feature type="sequence conflict" description="In Ref. 4; EAZ42391." evidence="7" ref="4">
    <original>R</original>
    <variation>G</variation>
    <location>
        <position position="108"/>
    </location>
</feature>
<organism>
    <name type="scientific">Oryza sativa subsp. japonica</name>
    <name type="common">Rice</name>
    <dbReference type="NCBI Taxonomy" id="39947"/>
    <lineage>
        <taxon>Eukaryota</taxon>
        <taxon>Viridiplantae</taxon>
        <taxon>Streptophyta</taxon>
        <taxon>Embryophyta</taxon>
        <taxon>Tracheophyta</taxon>
        <taxon>Spermatophyta</taxon>
        <taxon>Magnoliopsida</taxon>
        <taxon>Liliopsida</taxon>
        <taxon>Poales</taxon>
        <taxon>Poaceae</taxon>
        <taxon>BOP clade</taxon>
        <taxon>Oryzoideae</taxon>
        <taxon>Oryzeae</taxon>
        <taxon>Oryzinae</taxon>
        <taxon>Oryza</taxon>
        <taxon>Oryza sativa</taxon>
    </lineage>
</organism>
<keyword id="KW-0067">ATP-binding</keyword>
<keyword id="KW-1070">Brassinosteroid signaling pathway</keyword>
<keyword id="KW-1003">Cell membrane</keyword>
<keyword id="KW-0325">Glycoprotein</keyword>
<keyword id="KW-0418">Kinase</keyword>
<keyword id="KW-0433">Leucine-rich repeat</keyword>
<keyword id="KW-0472">Membrane</keyword>
<keyword id="KW-0547">Nucleotide-binding</keyword>
<keyword id="KW-0675">Receptor</keyword>
<keyword id="KW-1185">Reference proteome</keyword>
<keyword id="KW-0677">Repeat</keyword>
<keyword id="KW-0723">Serine/threonine-protein kinase</keyword>
<keyword id="KW-0732">Signal</keyword>
<keyword id="KW-0808">Transferase</keyword>
<keyword id="KW-0812">Transmembrane</keyword>
<keyword id="KW-1133">Transmembrane helix</keyword>
<name>BRL3_ORYSJ</name>
<accession>Q6ZCZ2</accession>
<accession>A3BS52</accession>
<protein>
    <recommendedName>
        <fullName evidence="7">Brassinosteroid LRR receptor kinase BRL3</fullName>
        <ecNumber evidence="7">2.7.11.1</ecNumber>
    </recommendedName>
    <alternativeName>
        <fullName evidence="6">BRI1-like receptor kinase 3</fullName>
    </alternativeName>
</protein>
<evidence type="ECO:0000250" key="1">
    <source>
        <dbReference type="UniProtKB" id="O22476"/>
    </source>
</evidence>
<evidence type="ECO:0000255" key="2"/>
<evidence type="ECO:0000255" key="3">
    <source>
        <dbReference type="PROSITE-ProRule" id="PRU00159"/>
    </source>
</evidence>
<evidence type="ECO:0000255" key="4">
    <source>
        <dbReference type="PROSITE-ProRule" id="PRU00498"/>
    </source>
</evidence>
<evidence type="ECO:0000269" key="5">
    <source>
    </source>
</evidence>
<evidence type="ECO:0000303" key="6">
    <source>
    </source>
</evidence>
<evidence type="ECO:0000305" key="7"/>
<evidence type="ECO:0000312" key="8">
    <source>
        <dbReference type="EMBL" id="BAD01717.1"/>
    </source>
</evidence>
<evidence type="ECO:0000312" key="9">
    <source>
        <dbReference type="EMBL" id="BAH94254.1"/>
    </source>
</evidence>
<evidence type="ECO:0000312" key="10">
    <source>
        <dbReference type="EMBL" id="EAZ42391.1"/>
    </source>
</evidence>
<gene>
    <name evidence="7" type="primary">BRL3</name>
    <name evidence="9" type="ordered locus">Os08g0342300</name>
    <name evidence="7" type="ordered locus">LOC_Os08g25380</name>
    <name evidence="8" type="ORF">OJ1790_D02.27</name>
    <name evidence="10" type="ORF">OsJ_26971</name>
</gene>
<sequence>MAAVRVVAPAPSVLLLVAAAVVLLHLARAIAGAADEAAALLAFKDASVAADPGGALAGWANSTTPGSPCAWAGVSCAAGRVRALDLSGMSLSGRLRLDALLALSALRRLDLRGNAFHGDLSRHGSPRRAAPCALVEVDISSNTFNGTLPRAFLASCGGLQTLNLSRNSLTGGGYPFPPSLRRLDMSRNQLSDAGLLNYSLTGCHGIQYLNLSANQFTGSLPGLAPCTEVSVLDLSWNLMSGVLPPRFVAMAPANLTYLSIAGNNFSMDISDYEFGGCANLTLLDWSYNRLRSTGLPRSLVDCRRLEALDMSGNKLLSGPIPTFLVELQALRRLSLAGNRFTGEISDKLSILCKTLVELDLSSNQLIGSLPASFGQCRFLQVLDLGNNQLSGDFVETVITNISSLRVLRLPFNNITGANPLPALASRCPLLEVIDLGSNEFDGEIMPDLCSSLPSLRKLLLPNNYINGTVPSSLSNCVNLESIDLSFNLLVGQIPPEILFLLKLVDLVLWANNLSGEIPDKFCFNSTALETLVISYNSFTGNIPESITRCVNLIWLSLAGNNLTGSIPSGFGNLQNLAILQLNKNSLSGKVPAELGSCSNLIWLDLNSNELTGTIPPQLAAQAGLITGAIVSGKQFAFLRNEAGNICPGAGVLFEFLDIRPDRLANFPAVHLCSSTRIYTGTTVYTFRNNGSMIFLDLSYNSLTGTIPASFGNMTYLEVLNLGHNELTGAIPDAFTGLKGIGALDLSHNHLTGVIPPGFGCLHFLADFDVSNNNLTGEIPTSGQLITFPASRYENNSGLCGIPLNPCVHNSGAGGLPQTSYGHRNFARQSVFLAVTLSVLILFSLLIIHYKLWKFHKNKTKEIQAGCSESLPGSSKSSWKLSGIGEPLSINMAIFENPLRKLTFSDLHQATNGFCAETLIGSGGFGEVYKAKLKDGNIVAVKKLMHFTGQGDREFTAEMETIGKIKHRNLVPLLGYCKIGDERLLVYEYMKNGSLDFVLHDKGEANMDLNWATRKKIAIGSARGLAFLHHSCVPHIIHRDMKSSNVLLDGNFDAYVSDFGMARLMNALDSHLTVSMLSGTPGYVPPEYCQDFRCTTKGDVYSYGVVLLELLTGKKPIDPTEFGDSNLVGWVKQMVEDRCSEIYDPTLMATTSSELELYQYLKIACRCLDDQPNRRPTMIQVMTMFKEFQVDSGSNFLDDFSLNSTNMEESSEKSV</sequence>
<reference key="1">
    <citation type="journal article" date="2005" name="Nature">
        <title>The map-based sequence of the rice genome.</title>
        <authorList>
            <consortium name="International rice genome sequencing project (IRGSP)"/>
        </authorList>
    </citation>
    <scope>NUCLEOTIDE SEQUENCE [LARGE SCALE GENOMIC DNA]</scope>
    <source>
        <strain>cv. Nipponbare</strain>
    </source>
</reference>
<reference key="2">
    <citation type="journal article" date="2008" name="Nucleic Acids Res.">
        <title>The rice annotation project database (RAP-DB): 2008 update.</title>
        <authorList>
            <consortium name="The rice annotation project (RAP)"/>
        </authorList>
    </citation>
    <scope>GENOME REANNOTATION</scope>
    <source>
        <strain>cv. Nipponbare</strain>
    </source>
</reference>
<reference key="3">
    <citation type="journal article" date="2013" name="Rice">
        <title>Improvement of the Oryza sativa Nipponbare reference genome using next generation sequence and optical map data.</title>
        <authorList>
            <person name="Kawahara Y."/>
            <person name="de la Bastide M."/>
            <person name="Hamilton J.P."/>
            <person name="Kanamori H."/>
            <person name="McCombie W.R."/>
            <person name="Ouyang S."/>
            <person name="Schwartz D.C."/>
            <person name="Tanaka T."/>
            <person name="Wu J."/>
            <person name="Zhou S."/>
            <person name="Childs K.L."/>
            <person name="Davidson R.M."/>
            <person name="Lin H."/>
            <person name="Quesada-Ocampo L."/>
            <person name="Vaillancourt B."/>
            <person name="Sakai H."/>
            <person name="Lee S.S."/>
            <person name="Kim J."/>
            <person name="Numa H."/>
            <person name="Itoh T."/>
            <person name="Buell C.R."/>
            <person name="Matsumoto T."/>
        </authorList>
    </citation>
    <scope>GENOME REANNOTATION</scope>
    <source>
        <strain>cv. Nipponbare</strain>
    </source>
</reference>
<reference key="4">
    <citation type="journal article" date="2005" name="PLoS Biol.">
        <title>The genomes of Oryza sativa: a history of duplications.</title>
        <authorList>
            <person name="Yu J."/>
            <person name="Wang J."/>
            <person name="Lin W."/>
            <person name="Li S."/>
            <person name="Li H."/>
            <person name="Zhou J."/>
            <person name="Ni P."/>
            <person name="Dong W."/>
            <person name="Hu S."/>
            <person name="Zeng C."/>
            <person name="Zhang J."/>
            <person name="Zhang Y."/>
            <person name="Li R."/>
            <person name="Xu Z."/>
            <person name="Li S."/>
            <person name="Li X."/>
            <person name="Zheng H."/>
            <person name="Cong L."/>
            <person name="Lin L."/>
            <person name="Yin J."/>
            <person name="Geng J."/>
            <person name="Li G."/>
            <person name="Shi J."/>
            <person name="Liu J."/>
            <person name="Lv H."/>
            <person name="Li J."/>
            <person name="Wang J."/>
            <person name="Deng Y."/>
            <person name="Ran L."/>
            <person name="Shi X."/>
            <person name="Wang X."/>
            <person name="Wu Q."/>
            <person name="Li C."/>
            <person name="Ren X."/>
            <person name="Wang J."/>
            <person name="Wang X."/>
            <person name="Li D."/>
            <person name="Liu D."/>
            <person name="Zhang X."/>
            <person name="Ji Z."/>
            <person name="Zhao W."/>
            <person name="Sun Y."/>
            <person name="Zhang Z."/>
            <person name="Bao J."/>
            <person name="Han Y."/>
            <person name="Dong L."/>
            <person name="Ji J."/>
            <person name="Chen P."/>
            <person name="Wu S."/>
            <person name="Liu J."/>
            <person name="Xiao Y."/>
            <person name="Bu D."/>
            <person name="Tan J."/>
            <person name="Yang L."/>
            <person name="Ye C."/>
            <person name="Zhang J."/>
            <person name="Xu J."/>
            <person name="Zhou Y."/>
            <person name="Yu Y."/>
            <person name="Zhang B."/>
            <person name="Zhuang S."/>
            <person name="Wei H."/>
            <person name="Liu B."/>
            <person name="Lei M."/>
            <person name="Yu H."/>
            <person name="Li Y."/>
            <person name="Xu H."/>
            <person name="Wei S."/>
            <person name="He X."/>
            <person name="Fang L."/>
            <person name="Zhang Z."/>
            <person name="Zhang Y."/>
            <person name="Huang X."/>
            <person name="Su Z."/>
            <person name="Tong W."/>
            <person name="Li J."/>
            <person name="Tong Z."/>
            <person name="Li S."/>
            <person name="Ye J."/>
            <person name="Wang L."/>
            <person name="Fang L."/>
            <person name="Lei T."/>
            <person name="Chen C.-S."/>
            <person name="Chen H.-C."/>
            <person name="Xu Z."/>
            <person name="Li H."/>
            <person name="Huang H."/>
            <person name="Zhang F."/>
            <person name="Xu H."/>
            <person name="Li N."/>
            <person name="Zhao C."/>
            <person name="Li S."/>
            <person name="Dong L."/>
            <person name="Huang Y."/>
            <person name="Li L."/>
            <person name="Xi Y."/>
            <person name="Qi Q."/>
            <person name="Li W."/>
            <person name="Zhang B."/>
            <person name="Hu W."/>
            <person name="Zhang Y."/>
            <person name="Tian X."/>
            <person name="Jiao Y."/>
            <person name="Liang X."/>
            <person name="Jin J."/>
            <person name="Gao L."/>
            <person name="Zheng W."/>
            <person name="Hao B."/>
            <person name="Liu S.-M."/>
            <person name="Wang W."/>
            <person name="Yuan L."/>
            <person name="Cao M."/>
            <person name="McDermott J."/>
            <person name="Samudrala R."/>
            <person name="Wang J."/>
            <person name="Wong G.K.-S."/>
            <person name="Yang H."/>
        </authorList>
    </citation>
    <scope>NUCLEOTIDE SEQUENCE [LARGE SCALE GENOMIC DNA]</scope>
    <source>
        <strain>cv. Nipponbare</strain>
    </source>
</reference>
<reference key="5">
    <citation type="journal article" date="2006" name="Plant Physiol.">
        <title>The role of OsBRI1 and its homologous genes, OsBRL1 and OsBRL3, in rice.</title>
        <authorList>
            <person name="Nakamura A."/>
            <person name="Fujioka S."/>
            <person name="Sunohara H."/>
            <person name="Kamiya N."/>
            <person name="Hong Z."/>
            <person name="Inukai Y."/>
            <person name="Miura K."/>
            <person name="Takatsuto S."/>
            <person name="Yoshida S."/>
            <person name="Ueguchi-Tanaka M."/>
            <person name="Hasegawa Y."/>
            <person name="Kitano H."/>
            <person name="Matsuoka M."/>
        </authorList>
    </citation>
    <scope>FUNCTION</scope>
    <scope>TISSUE SPECIFICITY</scope>
</reference>
<proteinExistence type="evidence at transcript level"/>
<dbReference type="EC" id="2.7.11.1" evidence="7"/>
<dbReference type="EMBL" id="AP004553">
    <property type="protein sequence ID" value="BAD01717.1"/>
    <property type="molecule type" value="Genomic_DNA"/>
</dbReference>
<dbReference type="EMBL" id="AP008214">
    <property type="protein sequence ID" value="BAH94254.1"/>
    <property type="molecule type" value="Genomic_DNA"/>
</dbReference>
<dbReference type="EMBL" id="AP014964">
    <property type="protein sequence ID" value="BAT05005.1"/>
    <property type="molecule type" value="Genomic_DNA"/>
</dbReference>
<dbReference type="EMBL" id="CM000145">
    <property type="protein sequence ID" value="EAZ42391.1"/>
    <property type="molecule type" value="Genomic_DNA"/>
</dbReference>
<dbReference type="SMR" id="Q6ZCZ2"/>
<dbReference type="FunCoup" id="Q6ZCZ2">
    <property type="interactions" value="400"/>
</dbReference>
<dbReference type="STRING" id="39947.Q6ZCZ2"/>
<dbReference type="GlyCosmos" id="Q6ZCZ2">
    <property type="glycosylation" value="14 sites, No reported glycans"/>
</dbReference>
<dbReference type="PaxDb" id="39947-Q6ZCZ2"/>
<dbReference type="EnsemblPlants" id="Os08t0342300-01">
    <property type="protein sequence ID" value="Os08t0342300-01"/>
    <property type="gene ID" value="Os08g0342300"/>
</dbReference>
<dbReference type="GeneID" id="9272003"/>
<dbReference type="Gramene" id="Os08t0342300-01">
    <property type="protein sequence ID" value="Os08t0342300-01"/>
    <property type="gene ID" value="Os08g0342300"/>
</dbReference>
<dbReference type="KEGG" id="dosa:Os08g0342300"/>
<dbReference type="KEGG" id="osa:9272003"/>
<dbReference type="eggNOG" id="ENOG502QQ5H">
    <property type="taxonomic scope" value="Eukaryota"/>
</dbReference>
<dbReference type="HOGENOM" id="CLU_000288_22_4_1"/>
<dbReference type="InParanoid" id="Q6ZCZ2"/>
<dbReference type="OMA" id="MIYFDIS"/>
<dbReference type="OrthoDB" id="1055097at2759"/>
<dbReference type="Proteomes" id="UP000000763">
    <property type="component" value="Chromosome 8"/>
</dbReference>
<dbReference type="Proteomes" id="UP000007752">
    <property type="component" value="Chromosome 8"/>
</dbReference>
<dbReference type="Proteomes" id="UP000059680">
    <property type="component" value="Chromosome 8"/>
</dbReference>
<dbReference type="GO" id="GO:0005886">
    <property type="term" value="C:plasma membrane"/>
    <property type="evidence" value="ECO:0000318"/>
    <property type="project" value="GO_Central"/>
</dbReference>
<dbReference type="GO" id="GO:0005524">
    <property type="term" value="F:ATP binding"/>
    <property type="evidence" value="ECO:0007669"/>
    <property type="project" value="UniProtKB-KW"/>
</dbReference>
<dbReference type="GO" id="GO:0106310">
    <property type="term" value="F:protein serine kinase activity"/>
    <property type="evidence" value="ECO:0007669"/>
    <property type="project" value="RHEA"/>
</dbReference>
<dbReference type="GO" id="GO:0004674">
    <property type="term" value="F:protein serine/threonine kinase activity"/>
    <property type="evidence" value="ECO:0007669"/>
    <property type="project" value="UniProtKB-KW"/>
</dbReference>
<dbReference type="GO" id="GO:0038023">
    <property type="term" value="F:signaling receptor activity"/>
    <property type="evidence" value="ECO:0000318"/>
    <property type="project" value="GO_Central"/>
</dbReference>
<dbReference type="GO" id="GO:0009742">
    <property type="term" value="P:brassinosteroid mediated signaling pathway"/>
    <property type="evidence" value="ECO:0007669"/>
    <property type="project" value="UniProtKB-KW"/>
</dbReference>
<dbReference type="GO" id="GO:0009755">
    <property type="term" value="P:hormone-mediated signaling pathway"/>
    <property type="evidence" value="ECO:0000318"/>
    <property type="project" value="GO_Central"/>
</dbReference>
<dbReference type="FunFam" id="1.10.510.10:FF:000291">
    <property type="entry name" value="Brassinosteroid LRR receptor kinase"/>
    <property type="match status" value="1"/>
</dbReference>
<dbReference type="FunFam" id="3.80.10.10:FF:000125">
    <property type="entry name" value="Brassinosteroid LRR receptor kinase"/>
    <property type="match status" value="1"/>
</dbReference>
<dbReference type="FunFam" id="3.80.10.10:FF:000639">
    <property type="entry name" value="Brassinosteroid LRR receptor kinase BRL3"/>
    <property type="match status" value="1"/>
</dbReference>
<dbReference type="FunFam" id="3.80.10.10:FF:000111">
    <property type="entry name" value="LRR receptor-like serine/threonine-protein kinase ERECTA"/>
    <property type="match status" value="1"/>
</dbReference>
<dbReference type="FunFam" id="3.30.200.20:FF:000150">
    <property type="entry name" value="serine/threonine-protein kinase BRI1-like 2"/>
    <property type="match status" value="1"/>
</dbReference>
<dbReference type="Gene3D" id="3.30.1490.310">
    <property type="match status" value="1"/>
</dbReference>
<dbReference type="Gene3D" id="3.30.200.20">
    <property type="entry name" value="Phosphorylase Kinase, domain 1"/>
    <property type="match status" value="1"/>
</dbReference>
<dbReference type="Gene3D" id="3.80.10.10">
    <property type="entry name" value="Ribonuclease Inhibitor"/>
    <property type="match status" value="2"/>
</dbReference>
<dbReference type="Gene3D" id="1.10.510.10">
    <property type="entry name" value="Transferase(Phosphotransferase) domain 1"/>
    <property type="match status" value="1"/>
</dbReference>
<dbReference type="InterPro" id="IPR045381">
    <property type="entry name" value="BRI1_island_dom"/>
</dbReference>
<dbReference type="InterPro" id="IPR011009">
    <property type="entry name" value="Kinase-like_dom_sf"/>
</dbReference>
<dbReference type="InterPro" id="IPR001611">
    <property type="entry name" value="Leu-rich_rpt"/>
</dbReference>
<dbReference type="InterPro" id="IPR032675">
    <property type="entry name" value="LRR_dom_sf"/>
</dbReference>
<dbReference type="InterPro" id="IPR013210">
    <property type="entry name" value="LRR_N_plant-typ"/>
</dbReference>
<dbReference type="InterPro" id="IPR000719">
    <property type="entry name" value="Prot_kinase_dom"/>
</dbReference>
<dbReference type="InterPro" id="IPR017441">
    <property type="entry name" value="Protein_kinase_ATP_BS"/>
</dbReference>
<dbReference type="InterPro" id="IPR008271">
    <property type="entry name" value="Ser/Thr_kinase_AS"/>
</dbReference>
<dbReference type="PANTHER" id="PTHR27000">
    <property type="entry name" value="LEUCINE-RICH REPEAT RECEPTOR-LIKE PROTEIN KINASE FAMILY PROTEIN-RELATED"/>
    <property type="match status" value="1"/>
</dbReference>
<dbReference type="PANTHER" id="PTHR27000:SF800">
    <property type="entry name" value="OS11G0197000 PROTEIN"/>
    <property type="match status" value="1"/>
</dbReference>
<dbReference type="Pfam" id="PF20141">
    <property type="entry name" value="Island"/>
    <property type="match status" value="1"/>
</dbReference>
<dbReference type="Pfam" id="PF00560">
    <property type="entry name" value="LRR_1"/>
    <property type="match status" value="5"/>
</dbReference>
<dbReference type="Pfam" id="PF13516">
    <property type="entry name" value="LRR_6"/>
    <property type="match status" value="1"/>
</dbReference>
<dbReference type="Pfam" id="PF13855">
    <property type="entry name" value="LRR_8"/>
    <property type="match status" value="2"/>
</dbReference>
<dbReference type="Pfam" id="PF08263">
    <property type="entry name" value="LRRNT_2"/>
    <property type="match status" value="1"/>
</dbReference>
<dbReference type="Pfam" id="PF00069">
    <property type="entry name" value="Pkinase"/>
    <property type="match status" value="1"/>
</dbReference>
<dbReference type="SMART" id="SM00220">
    <property type="entry name" value="S_TKc"/>
    <property type="match status" value="1"/>
</dbReference>
<dbReference type="SUPFAM" id="SSF52058">
    <property type="entry name" value="L domain-like"/>
    <property type="match status" value="1"/>
</dbReference>
<dbReference type="SUPFAM" id="SSF56112">
    <property type="entry name" value="Protein kinase-like (PK-like)"/>
    <property type="match status" value="1"/>
</dbReference>
<dbReference type="SUPFAM" id="SSF52047">
    <property type="entry name" value="RNI-like"/>
    <property type="match status" value="1"/>
</dbReference>
<dbReference type="PROSITE" id="PS00107">
    <property type="entry name" value="PROTEIN_KINASE_ATP"/>
    <property type="match status" value="1"/>
</dbReference>
<dbReference type="PROSITE" id="PS50011">
    <property type="entry name" value="PROTEIN_KINASE_DOM"/>
    <property type="match status" value="1"/>
</dbReference>
<dbReference type="PROSITE" id="PS00108">
    <property type="entry name" value="PROTEIN_KINASE_ST"/>
    <property type="match status" value="1"/>
</dbReference>
<comment type="function">
    <text evidence="5">May be involved in brassenosteroid (BR) perception in roots.</text>
</comment>
<comment type="catalytic activity">
    <reaction evidence="7">
        <text>L-seryl-[protein] + ATP = O-phospho-L-seryl-[protein] + ADP + H(+)</text>
        <dbReference type="Rhea" id="RHEA:17989"/>
        <dbReference type="Rhea" id="RHEA-COMP:9863"/>
        <dbReference type="Rhea" id="RHEA-COMP:11604"/>
        <dbReference type="ChEBI" id="CHEBI:15378"/>
        <dbReference type="ChEBI" id="CHEBI:29999"/>
        <dbReference type="ChEBI" id="CHEBI:30616"/>
        <dbReference type="ChEBI" id="CHEBI:83421"/>
        <dbReference type="ChEBI" id="CHEBI:456216"/>
        <dbReference type="EC" id="2.7.11.1"/>
    </reaction>
</comment>
<comment type="catalytic activity">
    <reaction evidence="7">
        <text>L-threonyl-[protein] + ATP = O-phospho-L-threonyl-[protein] + ADP + H(+)</text>
        <dbReference type="Rhea" id="RHEA:46608"/>
        <dbReference type="Rhea" id="RHEA-COMP:11060"/>
        <dbReference type="Rhea" id="RHEA-COMP:11605"/>
        <dbReference type="ChEBI" id="CHEBI:15378"/>
        <dbReference type="ChEBI" id="CHEBI:30013"/>
        <dbReference type="ChEBI" id="CHEBI:30616"/>
        <dbReference type="ChEBI" id="CHEBI:61977"/>
        <dbReference type="ChEBI" id="CHEBI:456216"/>
        <dbReference type="EC" id="2.7.11.1"/>
    </reaction>
</comment>
<comment type="subcellular location">
    <subcellularLocation>
        <location evidence="7">Cell membrane</location>
        <topology evidence="7">Single-pass type I membrane protein</topology>
    </subcellularLocation>
</comment>
<comment type="tissue specificity">
    <text evidence="5">Highly expressed in roots. Expressed at low levels in shoots.</text>
</comment>
<comment type="domain">
    <text evidence="1">Contains two pairs of conservatively spaced Cys (Cys pair 1 and 2) possibly involved in forming some heterodimers.</text>
</comment>
<comment type="similarity">
    <text evidence="3">Belongs to the protein kinase superfamily. Ser/Thr protein kinase family.</text>
</comment>